<comment type="function">
    <text evidence="1">Couples transcription and DNA repair by recognizing RNA polymerase (RNAP) stalled at DNA lesions. Mediates ATP-dependent release of RNAP and its truncated transcript from the DNA, and recruitment of nucleotide excision repair machinery to the damaged site.</text>
</comment>
<comment type="subcellular location">
    <subcellularLocation>
        <location evidence="1">Cytoplasm</location>
    </subcellularLocation>
</comment>
<comment type="similarity">
    <text evidence="1">In the N-terminal section; belongs to the UvrB family.</text>
</comment>
<comment type="similarity">
    <text evidence="1">In the C-terminal section; belongs to the helicase family. RecG subfamily.</text>
</comment>
<feature type="chain" id="PRO_0000281074" description="Transcription-repair-coupling factor">
    <location>
        <begin position="1"/>
        <end position="1120"/>
    </location>
</feature>
<feature type="domain" description="Helicase ATP-binding" evidence="1">
    <location>
        <begin position="591"/>
        <end position="756"/>
    </location>
</feature>
<feature type="domain" description="Helicase C-terminal" evidence="1">
    <location>
        <begin position="777"/>
        <end position="933"/>
    </location>
</feature>
<feature type="short sequence motif" description="DEEQ box">
    <location>
        <begin position="709"/>
        <end position="712"/>
    </location>
</feature>
<feature type="binding site" evidence="1">
    <location>
        <begin position="604"/>
        <end position="611"/>
    </location>
    <ligand>
        <name>ATP</name>
        <dbReference type="ChEBI" id="CHEBI:30616"/>
    </ligand>
</feature>
<evidence type="ECO:0000255" key="1">
    <source>
        <dbReference type="HAMAP-Rule" id="MF_00969"/>
    </source>
</evidence>
<keyword id="KW-0067">ATP-binding</keyword>
<keyword id="KW-0963">Cytoplasm</keyword>
<keyword id="KW-0227">DNA damage</keyword>
<keyword id="KW-0234">DNA repair</keyword>
<keyword id="KW-0238">DNA-binding</keyword>
<keyword id="KW-0347">Helicase</keyword>
<keyword id="KW-0378">Hydrolase</keyword>
<keyword id="KW-0547">Nucleotide-binding</keyword>
<name>MFD_RICTY</name>
<proteinExistence type="inferred from homology"/>
<accession>Q9AKD5</accession>
<reference key="1">
    <citation type="journal article" date="2001" name="Mol. Biol. Evol.">
        <title>Pseudogenes, junk DNA, and the dynamics of Rickettsia genomes.</title>
        <authorList>
            <person name="Andersson J.O."/>
            <person name="Andersson S.G.E."/>
        </authorList>
    </citation>
    <scope>NUCLEOTIDE SEQUENCE [GENOMIC DNA]</scope>
    <source>
        <strain>ATCC VR-144 / Wilmington</strain>
    </source>
</reference>
<reference key="2">
    <citation type="journal article" date="2004" name="J. Bacteriol.">
        <title>Complete genome sequence of Rickettsia typhi and comparison with sequences of other Rickettsiae.</title>
        <authorList>
            <person name="McLeod M.P."/>
            <person name="Qin X."/>
            <person name="Karpathy S.E."/>
            <person name="Gioia J."/>
            <person name="Highlander S.K."/>
            <person name="Fox G.E."/>
            <person name="McNeill T.Z."/>
            <person name="Jiang H."/>
            <person name="Muzny D."/>
            <person name="Jacob L.S."/>
            <person name="Hawes A.C."/>
            <person name="Sodergren E."/>
            <person name="Gill R."/>
            <person name="Hume J."/>
            <person name="Morgan M."/>
            <person name="Fan G."/>
            <person name="Amin A.G."/>
            <person name="Gibbs R.A."/>
            <person name="Hong C."/>
            <person name="Yu X.-J."/>
            <person name="Walker D.H."/>
            <person name="Weinstock G.M."/>
        </authorList>
    </citation>
    <scope>NUCLEOTIDE SEQUENCE [LARGE SCALE GENOMIC DNA]</scope>
    <source>
        <strain>ATCC VR-144 / Wilmington</strain>
    </source>
</reference>
<organism>
    <name type="scientific">Rickettsia typhi (strain ATCC VR-144 / Wilmington)</name>
    <dbReference type="NCBI Taxonomy" id="257363"/>
    <lineage>
        <taxon>Bacteria</taxon>
        <taxon>Pseudomonadati</taxon>
        <taxon>Pseudomonadota</taxon>
        <taxon>Alphaproteobacteria</taxon>
        <taxon>Rickettsiales</taxon>
        <taxon>Rickettsiaceae</taxon>
        <taxon>Rickettsieae</taxon>
        <taxon>Rickettsia</taxon>
        <taxon>typhus group</taxon>
    </lineage>
</organism>
<sequence>MLQQKFPATAKCFFAIDNFTKHLNQDFILSVNNEEEALKLYKQAFFFSSNENIYYFPSYDTIPYDYTSPNTNIISRRAETLTKLITNNNSKLLITHAANLLNKLPPKDFFSKYFLKLYPKIKFTIDELSMLLVENSFTRNISSNDVGEFSVRGEIIDIILPGPKAYRINFSWDYIESIKEFDINTQISTKYCTELVISPVSEIVLNSKTIGNFKNNYLRNFGVNHTDNPLYEAVISGRKFPGYEQLLPLFYDSCSSLVDYLNDPICIFDNLSKQEILEFENSCNDFYLARSNANKLKVNNFYPALSPASLYFTASAITELLEQKNNILISYENSEQASLIGNISSTSFMEKKTIFDKLFELIKANFHKKIIICSSVLSSFERIKSIIQNYKYTFNEINKLDDAKASVINIGIIPLNQSFYTKEYLFITSSELLEEKTLYTNTNKKLKNILLELDNLAEGEFVVHKDHGIGQFLKLEAFEIQGKLHDFLKILYSGNDKLYVPVENIEVIKKYGSNNVELDKLGSAAWHKSKAKLKDRIKEISLHLIQIAAKRKLNISTPIEFDLEEYDKFCANFPFIETEDQLTAINDIRKDLTNGMLMDRLICGDVGFGKTEVAMRAVFMVAKSLNEYLPQVAVVVPTTILCSQHFSRFIERFKGFGLNIKQLSSVVSSQEANIIRLELASGKINIIIGTHTLLHKNIKFFNLKLLIIDEEQHFGVSQKEFLKSLKYSSHVLAMSATPIPRTLQMSLTGLKELSIIATPPLNRLEVRTSVMPFDTVIIRDALLREHFRGGRSFYVVPRIKDMEDIEKQLKQIVPELSYKIAHGKMTPSKIDEVMSEFYAGKFDILISTTIIESGIDITEANTMIIHNADTLGLSQLYQLRGRIGRGKIRGYAYLTVASNKKLMQHSLRRLEIIQNSCALGSGFTIASHDADLRGFGNLIGEEQSGQIREVGAELYQEMLEEQIALLKDESIVSEQSFIPNINLGLSVFIPDHYVSDSALKIALYRRIGNLSNEIEVEKFKDEMIDRFGLLPIEFNNLLDIVKIKLLCFKLNIENLDSGDDGFVIRFYKNADMSDKILKFVSRYSNQTKIKPNNKLVFIKKLVDKNIITEANQLLWTLLEI</sequence>
<dbReference type="EC" id="3.6.4.-" evidence="1"/>
<dbReference type="EMBL" id="AJ293313">
    <property type="protein sequence ID" value="CAC33732.1"/>
    <property type="molecule type" value="Genomic_DNA"/>
</dbReference>
<dbReference type="EMBL" id="AE017197">
    <property type="protein sequence ID" value="AAU04051.1"/>
    <property type="molecule type" value="Genomic_DNA"/>
</dbReference>
<dbReference type="RefSeq" id="WP_011191032.1">
    <property type="nucleotide sequence ID" value="NC_006142.1"/>
</dbReference>
<dbReference type="SMR" id="Q9AKD5"/>
<dbReference type="KEGG" id="rty:RT0586"/>
<dbReference type="eggNOG" id="COG1197">
    <property type="taxonomic scope" value="Bacteria"/>
</dbReference>
<dbReference type="HOGENOM" id="CLU_005122_3_2_5"/>
<dbReference type="OrthoDB" id="9804325at2"/>
<dbReference type="Proteomes" id="UP000000604">
    <property type="component" value="Chromosome"/>
</dbReference>
<dbReference type="GO" id="GO:0005737">
    <property type="term" value="C:cytoplasm"/>
    <property type="evidence" value="ECO:0007669"/>
    <property type="project" value="UniProtKB-SubCell"/>
</dbReference>
<dbReference type="GO" id="GO:0005524">
    <property type="term" value="F:ATP binding"/>
    <property type="evidence" value="ECO:0007669"/>
    <property type="project" value="UniProtKB-UniRule"/>
</dbReference>
<dbReference type="GO" id="GO:0003684">
    <property type="term" value="F:damaged DNA binding"/>
    <property type="evidence" value="ECO:0007669"/>
    <property type="project" value="InterPro"/>
</dbReference>
<dbReference type="GO" id="GO:0003678">
    <property type="term" value="F:DNA helicase activity"/>
    <property type="evidence" value="ECO:0007669"/>
    <property type="project" value="TreeGrafter"/>
</dbReference>
<dbReference type="GO" id="GO:0016787">
    <property type="term" value="F:hydrolase activity"/>
    <property type="evidence" value="ECO:0007669"/>
    <property type="project" value="UniProtKB-KW"/>
</dbReference>
<dbReference type="GO" id="GO:0006355">
    <property type="term" value="P:regulation of DNA-templated transcription"/>
    <property type="evidence" value="ECO:0007669"/>
    <property type="project" value="UniProtKB-UniRule"/>
</dbReference>
<dbReference type="GO" id="GO:0000716">
    <property type="term" value="P:transcription-coupled nucleotide-excision repair, DNA damage recognition"/>
    <property type="evidence" value="ECO:0007669"/>
    <property type="project" value="UniProtKB-UniRule"/>
</dbReference>
<dbReference type="CDD" id="cd17991">
    <property type="entry name" value="DEXHc_TRCF"/>
    <property type="match status" value="1"/>
</dbReference>
<dbReference type="CDD" id="cd18810">
    <property type="entry name" value="SF2_C_TRCF"/>
    <property type="match status" value="1"/>
</dbReference>
<dbReference type="Gene3D" id="2.40.10.170">
    <property type="match status" value="1"/>
</dbReference>
<dbReference type="Gene3D" id="3.40.50.11140">
    <property type="match status" value="1"/>
</dbReference>
<dbReference type="Gene3D" id="3.40.50.11180">
    <property type="match status" value="1"/>
</dbReference>
<dbReference type="Gene3D" id="3.40.50.300">
    <property type="entry name" value="P-loop containing nucleotide triphosphate hydrolases"/>
    <property type="match status" value="2"/>
</dbReference>
<dbReference type="Gene3D" id="3.30.2060.10">
    <property type="entry name" value="Penicillin-binding protein 1b domain"/>
    <property type="match status" value="1"/>
</dbReference>
<dbReference type="Gene3D" id="3.90.1150.50">
    <property type="entry name" value="Transcription-repair-coupling factor, D7 domain"/>
    <property type="match status" value="1"/>
</dbReference>
<dbReference type="HAMAP" id="MF_00969">
    <property type="entry name" value="TRCF"/>
    <property type="match status" value="1"/>
</dbReference>
<dbReference type="InterPro" id="IPR003711">
    <property type="entry name" value="CarD-like/TRCF_RID"/>
</dbReference>
<dbReference type="InterPro" id="IPR036101">
    <property type="entry name" value="CarD-like/TRCF_RID_sf"/>
</dbReference>
<dbReference type="InterPro" id="IPR011545">
    <property type="entry name" value="DEAD/DEAH_box_helicase_dom"/>
</dbReference>
<dbReference type="InterPro" id="IPR014001">
    <property type="entry name" value="Helicase_ATP-bd"/>
</dbReference>
<dbReference type="InterPro" id="IPR001650">
    <property type="entry name" value="Helicase_C-like"/>
</dbReference>
<dbReference type="InterPro" id="IPR004576">
    <property type="entry name" value="Mfd"/>
</dbReference>
<dbReference type="InterPro" id="IPR027417">
    <property type="entry name" value="P-loop_NTPase"/>
</dbReference>
<dbReference type="InterPro" id="IPR047112">
    <property type="entry name" value="RecG/Mfd"/>
</dbReference>
<dbReference type="InterPro" id="IPR037235">
    <property type="entry name" value="TRCF-like_C_D7"/>
</dbReference>
<dbReference type="InterPro" id="IPR005118">
    <property type="entry name" value="TRCF_C"/>
</dbReference>
<dbReference type="InterPro" id="IPR041471">
    <property type="entry name" value="UvrB_inter"/>
</dbReference>
<dbReference type="NCBIfam" id="TIGR00580">
    <property type="entry name" value="mfd"/>
    <property type="match status" value="1"/>
</dbReference>
<dbReference type="PANTHER" id="PTHR47964">
    <property type="entry name" value="ATP-DEPENDENT DNA HELICASE HOMOLOG RECG, CHLOROPLASTIC"/>
    <property type="match status" value="1"/>
</dbReference>
<dbReference type="PANTHER" id="PTHR47964:SF1">
    <property type="entry name" value="ATP-DEPENDENT DNA HELICASE HOMOLOG RECG, CHLOROPLASTIC"/>
    <property type="match status" value="1"/>
</dbReference>
<dbReference type="Pfam" id="PF02559">
    <property type="entry name" value="CarD_TRCF_RID"/>
    <property type="match status" value="1"/>
</dbReference>
<dbReference type="Pfam" id="PF00270">
    <property type="entry name" value="DEAD"/>
    <property type="match status" value="1"/>
</dbReference>
<dbReference type="Pfam" id="PF00271">
    <property type="entry name" value="Helicase_C"/>
    <property type="match status" value="1"/>
</dbReference>
<dbReference type="Pfam" id="PF03461">
    <property type="entry name" value="TRCF"/>
    <property type="match status" value="1"/>
</dbReference>
<dbReference type="Pfam" id="PF17757">
    <property type="entry name" value="UvrB_inter"/>
    <property type="match status" value="1"/>
</dbReference>
<dbReference type="SMART" id="SM01058">
    <property type="entry name" value="CarD_TRCF"/>
    <property type="match status" value="1"/>
</dbReference>
<dbReference type="SMART" id="SM00487">
    <property type="entry name" value="DEXDc"/>
    <property type="match status" value="1"/>
</dbReference>
<dbReference type="SMART" id="SM00490">
    <property type="entry name" value="HELICc"/>
    <property type="match status" value="1"/>
</dbReference>
<dbReference type="SMART" id="SM00982">
    <property type="entry name" value="TRCF"/>
    <property type="match status" value="1"/>
</dbReference>
<dbReference type="SUPFAM" id="SSF141259">
    <property type="entry name" value="CarD-like"/>
    <property type="match status" value="1"/>
</dbReference>
<dbReference type="SUPFAM" id="SSF52540">
    <property type="entry name" value="P-loop containing nucleoside triphosphate hydrolases"/>
    <property type="match status" value="3"/>
</dbReference>
<dbReference type="SUPFAM" id="SSF143517">
    <property type="entry name" value="TRCF domain-like"/>
    <property type="match status" value="1"/>
</dbReference>
<dbReference type="PROSITE" id="PS51192">
    <property type="entry name" value="HELICASE_ATP_BIND_1"/>
    <property type="match status" value="1"/>
</dbReference>
<dbReference type="PROSITE" id="PS51194">
    <property type="entry name" value="HELICASE_CTER"/>
    <property type="match status" value="1"/>
</dbReference>
<gene>
    <name evidence="1" type="primary">mfd</name>
    <name type="ordered locus">RT0586</name>
</gene>
<protein>
    <recommendedName>
        <fullName evidence="1">Transcription-repair-coupling factor</fullName>
        <shortName evidence="1">TRCF</shortName>
        <ecNumber evidence="1">3.6.4.-</ecNumber>
    </recommendedName>
</protein>